<name>TYW31_PYRFU</name>
<sequence>MQFSENFERAKKEALISLEIALRKGEVDEDIIPLLKKINSLDNYFTTSSCSGRISVMEMPHFGDKVNAKWLGKWHREVSLDEVLGAIKKHRSGQLWFLVRSPILHVGAKTLEDAIRLVNLAVSCGFKYSNIKSISNKKLIVEIRSTERMDVLLGENGRILVGEEYLRKIVEIANAQVRRFKEKLKRLESNIDALNR</sequence>
<reference key="1">
    <citation type="journal article" date="1999" name="Genetics">
        <title>Divergence of the hyperthermophilic archaea Pyrococcus furiosus and P. horikoshii inferred from complete genomic sequences.</title>
        <authorList>
            <person name="Maeder D.L."/>
            <person name="Weiss R.B."/>
            <person name="Dunn D.M."/>
            <person name="Cherry J.L."/>
            <person name="Gonzalez J.M."/>
            <person name="DiRuggiero J."/>
            <person name="Robb F.T."/>
        </authorList>
    </citation>
    <scope>NUCLEOTIDE SEQUENCE [LARGE SCALE GENOMIC DNA]</scope>
    <source>
        <strain>ATCC 43587 / DSM 3638 / JCM 8422 / Vc1</strain>
    </source>
</reference>
<proteinExistence type="inferred from homology"/>
<accession>Q8U1V7</accession>
<feature type="chain" id="PRO_0000157095" description="tRNA(Phe) 7-((3-amino-3-carboxypropyl)-4-demethylwyosine(37)-N(4))-methyltransferase 1">
    <location>
        <begin position="1"/>
        <end position="196"/>
    </location>
</feature>
<organism>
    <name type="scientific">Pyrococcus furiosus (strain ATCC 43587 / DSM 3638 / JCM 8422 / Vc1)</name>
    <dbReference type="NCBI Taxonomy" id="186497"/>
    <lineage>
        <taxon>Archaea</taxon>
        <taxon>Methanobacteriati</taxon>
        <taxon>Methanobacteriota</taxon>
        <taxon>Thermococci</taxon>
        <taxon>Thermococcales</taxon>
        <taxon>Thermococcaceae</taxon>
        <taxon>Pyrococcus</taxon>
    </lineage>
</organism>
<dbReference type="EC" id="2.1.1.282" evidence="1"/>
<dbReference type="EMBL" id="AE009950">
    <property type="protein sequence ID" value="AAL81222.1"/>
    <property type="molecule type" value="Genomic_DNA"/>
</dbReference>
<dbReference type="SMR" id="Q8U1V7"/>
<dbReference type="STRING" id="186497.PF1098"/>
<dbReference type="PaxDb" id="186497-PF1098"/>
<dbReference type="KEGG" id="pfu:PF1098"/>
<dbReference type="PATRIC" id="fig|186497.12.peg.1158"/>
<dbReference type="eggNOG" id="arCOG04156">
    <property type="taxonomic scope" value="Archaea"/>
</dbReference>
<dbReference type="HOGENOM" id="CLU_047426_2_0_2"/>
<dbReference type="PhylomeDB" id="Q8U1V7"/>
<dbReference type="Proteomes" id="UP000001013">
    <property type="component" value="Chromosome"/>
</dbReference>
<dbReference type="GO" id="GO:0008175">
    <property type="term" value="F:tRNA methyltransferase activity"/>
    <property type="evidence" value="ECO:0007669"/>
    <property type="project" value="InterPro"/>
</dbReference>
<dbReference type="GO" id="GO:0030488">
    <property type="term" value="P:tRNA methylation"/>
    <property type="evidence" value="ECO:0007669"/>
    <property type="project" value="InterPro"/>
</dbReference>
<dbReference type="GO" id="GO:0031591">
    <property type="term" value="P:wybutosine biosynthetic process"/>
    <property type="evidence" value="ECO:0007669"/>
    <property type="project" value="InterPro"/>
</dbReference>
<dbReference type="FunFam" id="3.30.1960.10:FF:000010">
    <property type="entry name" value="tRNA(Phe) 7-((3-amino-3-carboxypropyl)-4-demethylwyosine(37)-N(4))-methyltransferase 1"/>
    <property type="match status" value="1"/>
</dbReference>
<dbReference type="Gene3D" id="3.30.1960.10">
    <property type="entry name" value="tRNA wybutosine-synthesizing-like"/>
    <property type="match status" value="1"/>
</dbReference>
<dbReference type="HAMAP" id="MF_00266">
    <property type="entry name" value="TYW3_archaea"/>
    <property type="match status" value="1"/>
</dbReference>
<dbReference type="InterPro" id="IPR022908">
    <property type="entry name" value="Taw3"/>
</dbReference>
<dbReference type="InterPro" id="IPR003827">
    <property type="entry name" value="tRNA_yW-synthesising"/>
</dbReference>
<dbReference type="InterPro" id="IPR036602">
    <property type="entry name" value="tRNA_yW-synthesising-like_sf"/>
</dbReference>
<dbReference type="NCBIfam" id="NF003266">
    <property type="entry name" value="PRK04235.1-5"/>
    <property type="match status" value="1"/>
</dbReference>
<dbReference type="NCBIfam" id="NF003267">
    <property type="entry name" value="PRK04235.1-6"/>
    <property type="match status" value="1"/>
</dbReference>
<dbReference type="NCBIfam" id="NF047731">
    <property type="entry name" value="tRNAMtaseTaw3"/>
    <property type="match status" value="1"/>
</dbReference>
<dbReference type="PANTHER" id="PTHR48418">
    <property type="entry name" value="TRNA WYBUTOSINE-SYNTHESIZING PROTEIN 3"/>
    <property type="match status" value="1"/>
</dbReference>
<dbReference type="PANTHER" id="PTHR48418:SF1">
    <property type="entry name" value="TRNA WYBUTOSINE-SYNTHESIZING PROTEIN 3"/>
    <property type="match status" value="1"/>
</dbReference>
<dbReference type="Pfam" id="PF02676">
    <property type="entry name" value="TYW3"/>
    <property type="match status" value="1"/>
</dbReference>
<dbReference type="SUPFAM" id="SSF111278">
    <property type="entry name" value="SSo0622-like"/>
    <property type="match status" value="1"/>
</dbReference>
<comment type="function">
    <text evidence="1">S-adenosyl-L-methionine-dependent methyltransferase that acts as a component of the wyosine derivatives biosynthesis pathway. Probably methylates N-4 position of wybutosine-86 to produce wybutosine-72.</text>
</comment>
<comment type="catalytic activity">
    <reaction evidence="1">
        <text>4-demethyl-7-[(3S)-3-amino-3-carboxypropyl]wyosine(37) in tRNA(Phe) + S-adenosyl-L-methionine = 7-[(3S)-3-amino-3-carboxypropyl]wyosine(37) in tRNA(Phe) + S-adenosyl-L-homocysteine + H(+)</text>
        <dbReference type="Rhea" id="RHEA:36635"/>
        <dbReference type="Rhea" id="RHEA-COMP:10378"/>
        <dbReference type="Rhea" id="RHEA-COMP:10379"/>
        <dbReference type="ChEBI" id="CHEBI:15378"/>
        <dbReference type="ChEBI" id="CHEBI:57856"/>
        <dbReference type="ChEBI" id="CHEBI:59789"/>
        <dbReference type="ChEBI" id="CHEBI:73543"/>
        <dbReference type="ChEBI" id="CHEBI:73550"/>
        <dbReference type="EC" id="2.1.1.282"/>
    </reaction>
</comment>
<comment type="similarity">
    <text evidence="1">Belongs to the TYW3 family.</text>
</comment>
<keyword id="KW-0489">Methyltransferase</keyword>
<keyword id="KW-1185">Reference proteome</keyword>
<keyword id="KW-0949">S-adenosyl-L-methionine</keyword>
<keyword id="KW-0808">Transferase</keyword>
<keyword id="KW-0819">tRNA processing</keyword>
<evidence type="ECO:0000255" key="1">
    <source>
        <dbReference type="HAMAP-Rule" id="MF_00266"/>
    </source>
</evidence>
<gene>
    <name evidence="1" type="primary">taw3-1</name>
    <name type="ordered locus">PF1098</name>
</gene>
<protein>
    <recommendedName>
        <fullName evidence="1">tRNA(Phe) 7-((3-amino-3-carboxypropyl)-4-demethylwyosine(37)-N(4))-methyltransferase 1</fullName>
        <ecNumber evidence="1">2.1.1.282</ecNumber>
    </recommendedName>
    <alternativeName>
        <fullName evidence="1">tRNA wyosine derivatives biosynthesis protein Taw3 1</fullName>
    </alternativeName>
</protein>